<organism>
    <name type="scientific">Oryza sativa subsp. japonica</name>
    <name type="common">Rice</name>
    <dbReference type="NCBI Taxonomy" id="39947"/>
    <lineage>
        <taxon>Eukaryota</taxon>
        <taxon>Viridiplantae</taxon>
        <taxon>Streptophyta</taxon>
        <taxon>Embryophyta</taxon>
        <taxon>Tracheophyta</taxon>
        <taxon>Spermatophyta</taxon>
        <taxon>Magnoliopsida</taxon>
        <taxon>Liliopsida</taxon>
        <taxon>Poales</taxon>
        <taxon>Poaceae</taxon>
        <taxon>BOP clade</taxon>
        <taxon>Oryzoideae</taxon>
        <taxon>Oryzeae</taxon>
        <taxon>Oryzinae</taxon>
        <taxon>Oryza</taxon>
        <taxon>Oryza sativa</taxon>
    </lineage>
</organism>
<name>PX113_ORYSJ</name>
<gene>
    <name type="primary">PEX11-3</name>
    <name type="ordered locus">Os03g0302000</name>
    <name type="ordered locus">LOC_Os03g19010</name>
    <name type="ORF">OsJ_010110</name>
</gene>
<comment type="function">
    <text evidence="1">Involved in peroxisomal proliferation.</text>
</comment>
<comment type="subcellular location">
    <subcellularLocation>
        <location evidence="1">Peroxisome membrane</location>
        <topology evidence="1">Multi-pass membrane protein</topology>
    </subcellularLocation>
</comment>
<comment type="tissue specificity">
    <text evidence="4">Expressed in seedlings, roots, leaf sheaths, spikelets and endosperm.</text>
</comment>
<comment type="induction">
    <text evidence="4">By abscisic acid and H(2)O(2). Down-regulated by salt stress.</text>
</comment>
<comment type="similarity">
    <text evidence="5">Belongs to the peroxin-11 family.</text>
</comment>
<proteinExistence type="evidence at transcript level"/>
<dbReference type="EMBL" id="DP000009">
    <property type="protein sequence ID" value="ABF95493.1"/>
    <property type="molecule type" value="Genomic_DNA"/>
</dbReference>
<dbReference type="EMBL" id="AP008209">
    <property type="protein sequence ID" value="BAF11782.1"/>
    <property type="molecule type" value="Genomic_DNA"/>
</dbReference>
<dbReference type="EMBL" id="AP014959">
    <property type="protein sequence ID" value="BAS83779.1"/>
    <property type="molecule type" value="Genomic_DNA"/>
</dbReference>
<dbReference type="EMBL" id="CM000140">
    <property type="protein sequence ID" value="EAZ26627.1"/>
    <property type="molecule type" value="Genomic_DNA"/>
</dbReference>
<dbReference type="EMBL" id="AK287976">
    <property type="status" value="NOT_ANNOTATED_CDS"/>
    <property type="molecule type" value="mRNA"/>
</dbReference>
<dbReference type="RefSeq" id="XP_015630855.1">
    <property type="nucleotide sequence ID" value="XM_015775369.1"/>
</dbReference>
<dbReference type="FunCoup" id="Q10MN2">
    <property type="interactions" value="185"/>
</dbReference>
<dbReference type="STRING" id="39947.Q10MN2"/>
<dbReference type="PaxDb" id="39947-Q10MN2"/>
<dbReference type="EnsemblPlants" id="Os03t0302000-01">
    <property type="protein sequence ID" value="Os03t0302000-01"/>
    <property type="gene ID" value="Os03g0302000"/>
</dbReference>
<dbReference type="Gramene" id="Os03t0302000-01">
    <property type="protein sequence ID" value="Os03t0302000-01"/>
    <property type="gene ID" value="Os03g0302000"/>
</dbReference>
<dbReference type="KEGG" id="dosa:Os03g0302000"/>
<dbReference type="eggNOG" id="KOG4186">
    <property type="taxonomic scope" value="Eukaryota"/>
</dbReference>
<dbReference type="HOGENOM" id="CLU_080291_0_0_1"/>
<dbReference type="InParanoid" id="Q10MN2"/>
<dbReference type="OMA" id="VSTHKNW"/>
<dbReference type="OrthoDB" id="411017at2759"/>
<dbReference type="Proteomes" id="UP000000763">
    <property type="component" value="Chromosome 3"/>
</dbReference>
<dbReference type="Proteomes" id="UP000007752">
    <property type="component" value="Chromosome 3"/>
</dbReference>
<dbReference type="Proteomes" id="UP000059680">
    <property type="component" value="Chromosome 3"/>
</dbReference>
<dbReference type="GO" id="GO:0005778">
    <property type="term" value="C:peroxisomal membrane"/>
    <property type="evidence" value="ECO:0000318"/>
    <property type="project" value="GO_Central"/>
</dbReference>
<dbReference type="GO" id="GO:0042802">
    <property type="term" value="F:identical protein binding"/>
    <property type="evidence" value="ECO:0007669"/>
    <property type="project" value="UniProtKB-ARBA"/>
</dbReference>
<dbReference type="GO" id="GO:0016559">
    <property type="term" value="P:peroxisome fission"/>
    <property type="evidence" value="ECO:0000318"/>
    <property type="project" value="GO_Central"/>
</dbReference>
<dbReference type="GO" id="GO:0044375">
    <property type="term" value="P:regulation of peroxisome size"/>
    <property type="evidence" value="ECO:0007669"/>
    <property type="project" value="UniProtKB-ARBA"/>
</dbReference>
<dbReference type="InterPro" id="IPR008733">
    <property type="entry name" value="PEX11"/>
</dbReference>
<dbReference type="PANTHER" id="PTHR12652:SF50">
    <property type="entry name" value="PEROXIN 11"/>
    <property type="match status" value="1"/>
</dbReference>
<dbReference type="PANTHER" id="PTHR12652">
    <property type="entry name" value="PEROXISOMAL BIOGENESIS FACTOR 11"/>
    <property type="match status" value="1"/>
</dbReference>
<dbReference type="Pfam" id="PF05648">
    <property type="entry name" value="PEX11"/>
    <property type="match status" value="1"/>
</dbReference>
<reference key="1">
    <citation type="journal article" date="2005" name="Genome Res.">
        <title>Sequence, annotation, and analysis of synteny between rice chromosome 3 and diverged grass species.</title>
        <authorList>
            <consortium name="The rice chromosome 3 sequencing consortium"/>
            <person name="Buell C.R."/>
            <person name="Yuan Q."/>
            <person name="Ouyang S."/>
            <person name="Liu J."/>
            <person name="Zhu W."/>
            <person name="Wang A."/>
            <person name="Maiti R."/>
            <person name="Haas B."/>
            <person name="Wortman J."/>
            <person name="Pertea M."/>
            <person name="Jones K.M."/>
            <person name="Kim M."/>
            <person name="Overton L."/>
            <person name="Tsitrin T."/>
            <person name="Fadrosh D."/>
            <person name="Bera J."/>
            <person name="Weaver B."/>
            <person name="Jin S."/>
            <person name="Johri S."/>
            <person name="Reardon M."/>
            <person name="Webb K."/>
            <person name="Hill J."/>
            <person name="Moffat K."/>
            <person name="Tallon L."/>
            <person name="Van Aken S."/>
            <person name="Lewis M."/>
            <person name="Utterback T."/>
            <person name="Feldblyum T."/>
            <person name="Zismann V."/>
            <person name="Iobst S."/>
            <person name="Hsiao J."/>
            <person name="de Vazeille A.R."/>
            <person name="Salzberg S.L."/>
            <person name="White O."/>
            <person name="Fraser C.M."/>
            <person name="Yu Y."/>
            <person name="Kim H."/>
            <person name="Rambo T."/>
            <person name="Currie J."/>
            <person name="Collura K."/>
            <person name="Kernodle-Thompson S."/>
            <person name="Wei F."/>
            <person name="Kudrna K."/>
            <person name="Ammiraju J.S.S."/>
            <person name="Luo M."/>
            <person name="Goicoechea J.L."/>
            <person name="Wing R.A."/>
            <person name="Henry D."/>
            <person name="Oates R."/>
            <person name="Palmer M."/>
            <person name="Pries G."/>
            <person name="Saski C."/>
            <person name="Simmons J."/>
            <person name="Soderlund C."/>
            <person name="Nelson W."/>
            <person name="de la Bastide M."/>
            <person name="Spiegel L."/>
            <person name="Nascimento L."/>
            <person name="Huang E."/>
            <person name="Preston R."/>
            <person name="Zutavern T."/>
            <person name="Palmer L."/>
            <person name="O'Shaughnessy A."/>
            <person name="Dike S."/>
            <person name="McCombie W.R."/>
            <person name="Minx P."/>
            <person name="Cordum H."/>
            <person name="Wilson R."/>
            <person name="Jin W."/>
            <person name="Lee H.R."/>
            <person name="Jiang J."/>
            <person name="Jackson S."/>
        </authorList>
    </citation>
    <scope>NUCLEOTIDE SEQUENCE [LARGE SCALE GENOMIC DNA]</scope>
    <source>
        <strain>cv. Nipponbare</strain>
    </source>
</reference>
<reference key="2">
    <citation type="journal article" date="2005" name="Nature">
        <title>The map-based sequence of the rice genome.</title>
        <authorList>
            <consortium name="International rice genome sequencing project (IRGSP)"/>
        </authorList>
    </citation>
    <scope>NUCLEOTIDE SEQUENCE [LARGE SCALE GENOMIC DNA]</scope>
    <source>
        <strain>cv. Nipponbare</strain>
    </source>
</reference>
<reference key="3">
    <citation type="journal article" date="2008" name="Nucleic Acids Res.">
        <title>The rice annotation project database (RAP-DB): 2008 update.</title>
        <authorList>
            <consortium name="The rice annotation project (RAP)"/>
        </authorList>
    </citation>
    <scope>GENOME REANNOTATION</scope>
    <source>
        <strain>cv. Nipponbare</strain>
    </source>
</reference>
<reference key="4">
    <citation type="journal article" date="2013" name="Rice">
        <title>Improvement of the Oryza sativa Nipponbare reference genome using next generation sequence and optical map data.</title>
        <authorList>
            <person name="Kawahara Y."/>
            <person name="de la Bastide M."/>
            <person name="Hamilton J.P."/>
            <person name="Kanamori H."/>
            <person name="McCombie W.R."/>
            <person name="Ouyang S."/>
            <person name="Schwartz D.C."/>
            <person name="Tanaka T."/>
            <person name="Wu J."/>
            <person name="Zhou S."/>
            <person name="Childs K.L."/>
            <person name="Davidson R.M."/>
            <person name="Lin H."/>
            <person name="Quesada-Ocampo L."/>
            <person name="Vaillancourt B."/>
            <person name="Sakai H."/>
            <person name="Lee S.S."/>
            <person name="Kim J."/>
            <person name="Numa H."/>
            <person name="Itoh T."/>
            <person name="Buell C.R."/>
            <person name="Matsumoto T."/>
        </authorList>
    </citation>
    <scope>GENOME REANNOTATION</scope>
    <source>
        <strain>cv. Nipponbare</strain>
    </source>
</reference>
<reference key="5">
    <citation type="journal article" date="2005" name="PLoS Biol.">
        <title>The genomes of Oryza sativa: a history of duplications.</title>
        <authorList>
            <person name="Yu J."/>
            <person name="Wang J."/>
            <person name="Lin W."/>
            <person name="Li S."/>
            <person name="Li H."/>
            <person name="Zhou J."/>
            <person name="Ni P."/>
            <person name="Dong W."/>
            <person name="Hu S."/>
            <person name="Zeng C."/>
            <person name="Zhang J."/>
            <person name="Zhang Y."/>
            <person name="Li R."/>
            <person name="Xu Z."/>
            <person name="Li S."/>
            <person name="Li X."/>
            <person name="Zheng H."/>
            <person name="Cong L."/>
            <person name="Lin L."/>
            <person name="Yin J."/>
            <person name="Geng J."/>
            <person name="Li G."/>
            <person name="Shi J."/>
            <person name="Liu J."/>
            <person name="Lv H."/>
            <person name="Li J."/>
            <person name="Wang J."/>
            <person name="Deng Y."/>
            <person name="Ran L."/>
            <person name="Shi X."/>
            <person name="Wang X."/>
            <person name="Wu Q."/>
            <person name="Li C."/>
            <person name="Ren X."/>
            <person name="Wang J."/>
            <person name="Wang X."/>
            <person name="Li D."/>
            <person name="Liu D."/>
            <person name="Zhang X."/>
            <person name="Ji Z."/>
            <person name="Zhao W."/>
            <person name="Sun Y."/>
            <person name="Zhang Z."/>
            <person name="Bao J."/>
            <person name="Han Y."/>
            <person name="Dong L."/>
            <person name="Ji J."/>
            <person name="Chen P."/>
            <person name="Wu S."/>
            <person name="Liu J."/>
            <person name="Xiao Y."/>
            <person name="Bu D."/>
            <person name="Tan J."/>
            <person name="Yang L."/>
            <person name="Ye C."/>
            <person name="Zhang J."/>
            <person name="Xu J."/>
            <person name="Zhou Y."/>
            <person name="Yu Y."/>
            <person name="Zhang B."/>
            <person name="Zhuang S."/>
            <person name="Wei H."/>
            <person name="Liu B."/>
            <person name="Lei M."/>
            <person name="Yu H."/>
            <person name="Li Y."/>
            <person name="Xu H."/>
            <person name="Wei S."/>
            <person name="He X."/>
            <person name="Fang L."/>
            <person name="Zhang Z."/>
            <person name="Zhang Y."/>
            <person name="Huang X."/>
            <person name="Su Z."/>
            <person name="Tong W."/>
            <person name="Li J."/>
            <person name="Tong Z."/>
            <person name="Li S."/>
            <person name="Ye J."/>
            <person name="Wang L."/>
            <person name="Fang L."/>
            <person name="Lei T."/>
            <person name="Chen C.-S."/>
            <person name="Chen H.-C."/>
            <person name="Xu Z."/>
            <person name="Li H."/>
            <person name="Huang H."/>
            <person name="Zhang F."/>
            <person name="Xu H."/>
            <person name="Li N."/>
            <person name="Zhao C."/>
            <person name="Li S."/>
            <person name="Dong L."/>
            <person name="Huang Y."/>
            <person name="Li L."/>
            <person name="Xi Y."/>
            <person name="Qi Q."/>
            <person name="Li W."/>
            <person name="Zhang B."/>
            <person name="Hu W."/>
            <person name="Zhang Y."/>
            <person name="Tian X."/>
            <person name="Jiao Y."/>
            <person name="Liang X."/>
            <person name="Jin J."/>
            <person name="Gao L."/>
            <person name="Zheng W."/>
            <person name="Hao B."/>
            <person name="Liu S.-M."/>
            <person name="Wang W."/>
            <person name="Yuan L."/>
            <person name="Cao M."/>
            <person name="McDermott J."/>
            <person name="Samudrala R."/>
            <person name="Wang J."/>
            <person name="Wong G.K.-S."/>
            <person name="Yang H."/>
        </authorList>
    </citation>
    <scope>NUCLEOTIDE SEQUENCE [LARGE SCALE GENOMIC DNA]</scope>
    <source>
        <strain>cv. Nipponbare</strain>
    </source>
</reference>
<reference key="6">
    <citation type="submission" date="2007-09" db="EMBL/GenBank/DDBJ databases">
        <title>Oryza sativa full length cDNA.</title>
        <authorList>
            <consortium name="The rice full-length cDNA consortium"/>
        </authorList>
    </citation>
    <scope>NUCLEOTIDE SEQUENCE [LARGE SCALE MRNA]</scope>
    <source>
        <strain>cv. Nipponbare</strain>
    </source>
</reference>
<reference key="7">
    <citation type="journal article" date="2008" name="Gene">
        <title>Comprehensive sequence and expression profile analysis of PEX11 gene family in rice.</title>
        <authorList>
            <person name="Nayidu N.K."/>
            <person name="Wang L."/>
            <person name="Xie W."/>
            <person name="Zhang C."/>
            <person name="Fan C."/>
            <person name="Lian X."/>
            <person name="Zhang Q."/>
            <person name="Xiong L."/>
        </authorList>
    </citation>
    <scope>TISSUE SPECIFICITY</scope>
    <scope>INDUCTION</scope>
    <scope>GENE FAMILY</scope>
    <scope>NOMENCLATURE</scope>
</reference>
<evidence type="ECO:0000250" key="1"/>
<evidence type="ECO:0000255" key="2"/>
<evidence type="ECO:0000256" key="3">
    <source>
        <dbReference type="SAM" id="MobiDB-lite"/>
    </source>
</evidence>
<evidence type="ECO:0000269" key="4">
    <source>
    </source>
</evidence>
<evidence type="ECO:0000305" key="5"/>
<accession>Q10MN2</accession>
<accession>A0A0P0VWF8</accession>
<sequence>MAAAAAAAGSSDSRKPAAHPPPRDFLVHVEAYLSRRDGVDKLLKISRYAARLALAAGPLPPAASARLKSFESSVGLSRKAFRLGKFVQNVNALRAHPHPPPAVALLAYGGEGVYYFLEQFVWLAKAGLLPAHLLPRLQRLSAWAELLGYVGSITIKLEEIGKLESSVKMRLKEGCREESDVVRTLRVKLLLKRMSVVQDVADAVMALGDVTDGKGLLGSSTLMASAGLLSALISAHKNWNSC</sequence>
<keyword id="KW-0472">Membrane</keyword>
<keyword id="KW-0576">Peroxisome</keyword>
<keyword id="KW-0962">Peroxisome biogenesis</keyword>
<keyword id="KW-1185">Reference proteome</keyword>
<keyword id="KW-0812">Transmembrane</keyword>
<keyword id="KW-1133">Transmembrane helix</keyword>
<protein>
    <recommendedName>
        <fullName>Peroxisomal membrane protein 11-3</fullName>
    </recommendedName>
    <alternativeName>
        <fullName>OsPEX11-3</fullName>
    </alternativeName>
    <alternativeName>
        <fullName>Peroxin-11-3</fullName>
    </alternativeName>
</protein>
<feature type="chain" id="PRO_0000330303" description="Peroxisomal membrane protein 11-3">
    <location>
        <begin position="1"/>
        <end position="242"/>
    </location>
</feature>
<feature type="topological domain" description="Cytoplasmic" evidence="2">
    <location>
        <begin position="1"/>
        <end position="102"/>
    </location>
</feature>
<feature type="transmembrane region" description="Helical" evidence="2">
    <location>
        <begin position="103"/>
        <end position="123"/>
    </location>
</feature>
<feature type="topological domain" description="Lumenal" evidence="2">
    <location>
        <begin position="124"/>
        <end position="214"/>
    </location>
</feature>
<feature type="transmembrane region" description="Helical" evidence="2">
    <location>
        <begin position="215"/>
        <end position="235"/>
    </location>
</feature>
<feature type="topological domain" description="Cytoplasmic" evidence="2">
    <location>
        <begin position="236"/>
        <end position="242"/>
    </location>
</feature>
<feature type="region of interest" description="Disordered" evidence="3">
    <location>
        <begin position="1"/>
        <end position="22"/>
    </location>
</feature>